<proteinExistence type="evidence at protein level"/>
<comment type="function">
    <text evidence="4">Aux/IAA proteins are short-lived transcriptional factors that function as repressors of early auxin response genes at low auxin concentrations. Repression is thought to result from the interaction with auxin response factors (ARFs), proteins that bind to the auxin-responsive promoter element (AuxRE). Formation of heterodimers with ARF proteins may alter their ability to modulate early auxin response genes expression.</text>
</comment>
<comment type="subunit">
    <text evidence="1 5">Homodimers and heterodimers (By similarity). Interacts with TPL.</text>
</comment>
<comment type="interaction">
    <interactant intactId="EBI-1554143">
        <id>Q38831</id>
    </interactant>
    <interactant intactId="EBI-3946783">
        <id>Q9C5W9</id>
        <label>ARF18</label>
    </interactant>
    <organismsDiffer>false</organismsDiffer>
    <experiments>3</experiments>
</comment>
<comment type="interaction">
    <interactant intactId="EBI-1554143">
        <id>Q38831</id>
    </interactant>
    <interactant intactId="EBI-529887">
        <id>Q8RYC8</id>
        <label>ARF19</label>
    </interactant>
    <organismsDiffer>false</organismsDiffer>
    <experiments>3</experiments>
</comment>
<comment type="interaction">
    <interactant intactId="EBI-1554143">
        <id>Q38831</id>
    </interactant>
    <interactant intactId="EBI-629519">
        <id>P93024</id>
        <label>ARF5</label>
    </interactant>
    <organismsDiffer>false</organismsDiffer>
    <experiments>3</experiments>
</comment>
<comment type="interaction">
    <interactant intactId="EBI-1554143">
        <id>Q38831</id>
    </interactant>
    <interactant intactId="EBI-630505">
        <id>P49677</id>
        <label>IAA1</label>
    </interactant>
    <organismsDiffer>false</organismsDiffer>
    <experiments>8</experiments>
</comment>
<comment type="interaction">
    <interactant intactId="EBI-1554143">
        <id>Q38831</id>
    </interactant>
    <interactant intactId="EBI-3946434">
        <id>Q38828</id>
        <label>IAA10</label>
    </interactant>
    <organismsDiffer>false</organismsDiffer>
    <experiments>10</experiments>
</comment>
<comment type="interaction">
    <interactant intactId="EBI-1554143">
        <id>Q38831</id>
    </interactant>
    <interactant intactId="EBI-2367923">
        <id>Q38829</id>
        <label>IAA11</label>
    </interactant>
    <organismsDiffer>false</organismsDiffer>
    <experiments>6</experiments>
</comment>
<comment type="interaction">
    <interactant intactId="EBI-1554143">
        <id>Q38831</id>
    </interactant>
    <interactant intactId="EBI-617608">
        <id>Q38830</id>
        <label>IAA12</label>
    </interactant>
    <organismsDiffer>false</organismsDiffer>
    <experiments>8</experiments>
</comment>
<comment type="interaction">
    <interactant intactId="EBI-1554143">
        <id>Q38831</id>
    </interactant>
    <interactant intactId="EBI-1554143">
        <id>Q38831</id>
        <label>IAA13</label>
    </interactant>
    <organismsDiffer>false</organismsDiffer>
    <experiments>4</experiments>
</comment>
<comment type="interaction">
    <interactant intactId="EBI-1554143">
        <id>Q38831</id>
    </interactant>
    <interactant intactId="EBI-2295562">
        <id>Q38832</id>
        <label>IAA14</label>
    </interactant>
    <organismsDiffer>false</organismsDiffer>
    <experiments>4</experiments>
</comment>
<comment type="interaction">
    <interactant intactId="EBI-1554143">
        <id>Q38831</id>
    </interactant>
    <interactant intactId="EBI-25524519">
        <id>A0A2H1ZEF6</id>
        <label>IAA15</label>
    </interactant>
    <organismsDiffer>false</organismsDiffer>
    <experiments>5</experiments>
</comment>
<comment type="interaction">
    <interactant intactId="EBI-1554143">
        <id>Q38831</id>
    </interactant>
    <interactant intactId="EBI-632231">
        <id>O24407</id>
        <label>IAA16</label>
    </interactant>
    <organismsDiffer>false</organismsDiffer>
    <experiments>9</experiments>
</comment>
<comment type="interaction">
    <interactant intactId="EBI-1554143">
        <id>Q38831</id>
    </interactant>
    <interactant intactId="EBI-632243">
        <id>P93830</id>
        <label>IAA17</label>
    </interactant>
    <organismsDiffer>false</organismsDiffer>
    <experiments>9</experiments>
</comment>
<comment type="interaction">
    <interactant intactId="EBI-1554143">
        <id>Q38831</id>
    </interactant>
    <interactant intactId="EBI-2295525">
        <id>O24408</id>
        <label>IAA18</label>
    </interactant>
    <organismsDiffer>false</organismsDiffer>
    <experiments>3</experiments>
</comment>
<comment type="interaction">
    <interactant intactId="EBI-1554143">
        <id>Q38831</id>
    </interactant>
    <interactant intactId="EBI-632257">
        <id>O24409</id>
        <label>IAA19</label>
    </interactant>
    <organismsDiffer>false</organismsDiffer>
    <experiments>11</experiments>
</comment>
<comment type="interaction">
    <interactant intactId="EBI-1554143">
        <id>Q38831</id>
    </interactant>
    <interactant intactId="EBI-632343">
        <id>P49678</id>
        <label>IAA2</label>
    </interactant>
    <organismsDiffer>false</organismsDiffer>
    <experiments>8</experiments>
</comment>
<comment type="interaction">
    <interactant intactId="EBI-1554143">
        <id>Q38831</id>
    </interactant>
    <interactant intactId="EBI-632272">
        <id>O24410</id>
        <label>IAA20</label>
    </interactant>
    <organismsDiffer>false</organismsDiffer>
    <experiments>5</experiments>
</comment>
<comment type="interaction">
    <interactant intactId="EBI-1554143">
        <id>Q38831</id>
    </interactant>
    <interactant intactId="EBI-3947418">
        <id>Q8LAL2</id>
        <label>IAA26</label>
    </interactant>
    <organismsDiffer>false</organismsDiffer>
    <experiments>8</experiments>
</comment>
<comment type="interaction">
    <interactant intactId="EBI-1554143">
        <id>Q38831</id>
    </interactant>
    <interactant intactId="EBI-3946677">
        <id>Q9ZSY8</id>
        <label>IAA27</label>
    </interactant>
    <organismsDiffer>false</organismsDiffer>
    <experiments>9</experiments>
</comment>
<comment type="interaction">
    <interactant intactId="EBI-1554143">
        <id>Q38831</id>
    </interactant>
    <interactant intactId="EBI-3133404">
        <id>Q9XFM0</id>
        <label>IAA28</label>
    </interactant>
    <organismsDiffer>false</organismsDiffer>
    <experiments>8</experiments>
</comment>
<comment type="interaction">
    <interactant intactId="EBI-1554143">
        <id>Q38831</id>
    </interactant>
    <interactant intactId="EBI-307174">
        <id>Q38822</id>
        <label>IAA3</label>
    </interactant>
    <organismsDiffer>false</organismsDiffer>
    <experiments>9</experiments>
</comment>
<comment type="interaction">
    <interactant intactId="EBI-1554143">
        <id>Q38831</id>
    </interactant>
    <interactant intactId="EBI-3946408">
        <id>Q8H174</id>
        <label>IAA31</label>
    </interactant>
    <organismsDiffer>false</organismsDiffer>
    <experiments>9</experiments>
</comment>
<comment type="interaction">
    <interactant intactId="EBI-1554143">
        <id>Q38831</id>
    </interactant>
    <interactant intactId="EBI-3946448">
        <id>Q8RYC6</id>
        <label>IAA32</label>
    </interactant>
    <organismsDiffer>false</organismsDiffer>
    <experiments>5</experiments>
</comment>
<comment type="interaction">
    <interactant intactId="EBI-1554143">
        <id>Q38831</id>
    </interactant>
    <interactant intactId="EBI-3946739">
        <id>Q9FKM7</id>
        <label>IAA33</label>
    </interactant>
    <organismsDiffer>false</organismsDiffer>
    <experiments>6</experiments>
</comment>
<comment type="interaction">
    <interactant intactId="EBI-1554143">
        <id>Q38831</id>
    </interactant>
    <interactant intactId="EBI-3946459">
        <id>Q9C5X0</id>
        <label>IAA34</label>
    </interactant>
    <organismsDiffer>false</organismsDiffer>
    <experiments>6</experiments>
</comment>
<comment type="interaction">
    <interactant intactId="EBI-1554143">
        <id>Q38831</id>
    </interactant>
    <interactant intactId="EBI-632187">
        <id>P33077</id>
        <label>IAA4</label>
    </interactant>
    <organismsDiffer>false</organismsDiffer>
    <experiments>9</experiments>
</comment>
<comment type="interaction">
    <interactant intactId="EBI-1554143">
        <id>Q38831</id>
    </interactant>
    <interactant intactId="EBI-3946487">
        <id>P33078</id>
        <label>IAA5</label>
    </interactant>
    <organismsDiffer>false</organismsDiffer>
    <experiments>6</experiments>
</comment>
<comment type="interaction">
    <interactant intactId="EBI-1554143">
        <id>Q38831</id>
    </interactant>
    <interactant intactId="EBI-1554124">
        <id>Q38824</id>
        <label>IAA6</label>
    </interactant>
    <organismsDiffer>false</organismsDiffer>
    <experiments>8</experiments>
</comment>
<comment type="interaction">
    <interactant intactId="EBI-1554143">
        <id>Q38831</id>
    </interactant>
    <interactant intactId="EBI-602959">
        <id>Q38825</id>
        <label>IAA7</label>
    </interactant>
    <organismsDiffer>false</organismsDiffer>
    <experiments>7</experiments>
</comment>
<comment type="interaction">
    <interactant intactId="EBI-1554143">
        <id>Q38831</id>
    </interactant>
    <interactant intactId="EBI-632200">
        <id>Q38826</id>
        <label>IAA8</label>
    </interactant>
    <organismsDiffer>false</organismsDiffer>
    <experiments>6</experiments>
</comment>
<comment type="interaction">
    <interactant intactId="EBI-1554143">
        <id>Q38831</id>
    </interactant>
    <interactant intactId="EBI-632216">
        <id>Q38827</id>
        <label>IAA9</label>
    </interactant>
    <organismsDiffer>false</organismsDiffer>
    <experiments>4</experiments>
</comment>
<comment type="subcellular location">
    <subcellularLocation>
        <location evidence="1">Nucleus</location>
    </subcellularLocation>
</comment>
<comment type="alternative products">
    <event type="alternative splicing"/>
    <isoform>
        <id>Q38831-1</id>
        <name>1</name>
        <sequence type="displayed"/>
    </isoform>
    <isoform>
        <id>Q38831-2</id>
        <name>2</name>
        <sequence type="described" ref="VSP_008997"/>
    </isoform>
</comment>
<comment type="tissue specificity">
    <text evidence="6">Preferentially expressed in stems.</text>
</comment>
<comment type="induction">
    <text evidence="6">By auxin.</text>
</comment>
<comment type="domain">
    <text>The N-terminal half of the protein contains two conserved domains I and II. Domain I includes a slightly degenerated ERF-associated amphiphilic repression (EAR) motif which seems to be involved in the activity of transcriptional repression. Domain II is required for the correct degradation of the protein through the SCF-mediated ubiquitin-proteasome pathway. Interactions between Aux/IAA proteins and auxin response factors (ARFs) occur through their C-terminal dimerization domains III and IV.</text>
</comment>
<comment type="miscellaneous">
    <molecule>Isoform 1</molecule>
    <text>May be due to a competing acceptor splice site.</text>
</comment>
<comment type="similarity">
    <text evidence="10">Belongs to the Aux/IAA family.</text>
</comment>
<accession>Q38831</accession>
<accession>Q84TE5</accession>
<protein>
    <recommendedName>
        <fullName>Auxin-responsive protein IAA13</fullName>
    </recommendedName>
    <alternativeName>
        <fullName>Indoleacetic acid-induced protein 13</fullName>
    </alternativeName>
</protein>
<evidence type="ECO:0000250" key="1"/>
<evidence type="ECO:0000255" key="2">
    <source>
        <dbReference type="PROSITE-ProRule" id="PRU01081"/>
    </source>
</evidence>
<evidence type="ECO:0000256" key="3">
    <source>
        <dbReference type="SAM" id="MobiDB-lite"/>
    </source>
</evidence>
<evidence type="ECO:0000269" key="4">
    <source>
    </source>
</evidence>
<evidence type="ECO:0000269" key="5">
    <source>
    </source>
</evidence>
<evidence type="ECO:0000269" key="6">
    <source>
    </source>
</evidence>
<evidence type="ECO:0000303" key="7">
    <source>
    </source>
</evidence>
<evidence type="ECO:0000303" key="8">
    <source>
    </source>
</evidence>
<evidence type="ECO:0000303" key="9">
    <source ref="5"/>
</evidence>
<evidence type="ECO:0000305" key="10"/>
<gene>
    <name type="primary">IAA13</name>
    <name type="ordered locus">At2g33310</name>
    <name type="ORF">F4P9.8</name>
</gene>
<reference key="1">
    <citation type="journal article" date="1995" name="J. Mol. Biol.">
        <title>The PS-IAA4/5-like family of early auxin-inducible mRNAs in Arabidopsis thaliana.</title>
        <authorList>
            <person name="Abel S."/>
            <person name="Nguyen M.D."/>
            <person name="Theologis A."/>
        </authorList>
    </citation>
    <scope>NUCLEOTIDE SEQUENCE [MRNA] (ISOFORM 2)</scope>
    <scope>TISSUE SPECIFICITY</scope>
    <scope>INDUCTION</scope>
    <source>
        <strain>cv. Columbia</strain>
    </source>
</reference>
<reference key="2">
    <citation type="journal article" date="1999" name="Nature">
        <title>Sequence and analysis of chromosome 2 of the plant Arabidopsis thaliana.</title>
        <authorList>
            <person name="Lin X."/>
            <person name="Kaul S."/>
            <person name="Rounsley S.D."/>
            <person name="Shea T.P."/>
            <person name="Benito M.-I."/>
            <person name="Town C.D."/>
            <person name="Fujii C.Y."/>
            <person name="Mason T.M."/>
            <person name="Bowman C.L."/>
            <person name="Barnstead M.E."/>
            <person name="Feldblyum T.V."/>
            <person name="Buell C.R."/>
            <person name="Ketchum K.A."/>
            <person name="Lee J.J."/>
            <person name="Ronning C.M."/>
            <person name="Koo H.L."/>
            <person name="Moffat K.S."/>
            <person name="Cronin L.A."/>
            <person name="Shen M."/>
            <person name="Pai G."/>
            <person name="Van Aken S."/>
            <person name="Umayam L."/>
            <person name="Tallon L.J."/>
            <person name="Gill J.E."/>
            <person name="Adams M.D."/>
            <person name="Carrera A.J."/>
            <person name="Creasy T.H."/>
            <person name="Goodman H.M."/>
            <person name="Somerville C.R."/>
            <person name="Copenhaver G.P."/>
            <person name="Preuss D."/>
            <person name="Nierman W.C."/>
            <person name="White O."/>
            <person name="Eisen J.A."/>
            <person name="Salzberg S.L."/>
            <person name="Fraser C.M."/>
            <person name="Venter J.C."/>
        </authorList>
    </citation>
    <scope>NUCLEOTIDE SEQUENCE [LARGE SCALE GENOMIC DNA]</scope>
    <source>
        <strain>cv. Columbia</strain>
    </source>
</reference>
<reference key="3">
    <citation type="journal article" date="2017" name="Plant J.">
        <title>Araport11: a complete reannotation of the Arabidopsis thaliana reference genome.</title>
        <authorList>
            <person name="Cheng C.Y."/>
            <person name="Krishnakumar V."/>
            <person name="Chan A.P."/>
            <person name="Thibaud-Nissen F."/>
            <person name="Schobel S."/>
            <person name="Town C.D."/>
        </authorList>
    </citation>
    <scope>GENOME REANNOTATION</scope>
    <source>
        <strain>cv. Columbia</strain>
    </source>
</reference>
<reference key="4">
    <citation type="journal article" date="2003" name="Science">
        <title>Empirical analysis of transcriptional activity in the Arabidopsis genome.</title>
        <authorList>
            <person name="Yamada K."/>
            <person name="Lim J."/>
            <person name="Dale J.M."/>
            <person name="Chen H."/>
            <person name="Shinn P."/>
            <person name="Palm C.J."/>
            <person name="Southwick A.M."/>
            <person name="Wu H.C."/>
            <person name="Kim C.J."/>
            <person name="Nguyen M."/>
            <person name="Pham P.K."/>
            <person name="Cheuk R.F."/>
            <person name="Karlin-Newmann G."/>
            <person name="Liu S.X."/>
            <person name="Lam B."/>
            <person name="Sakano H."/>
            <person name="Wu T."/>
            <person name="Yu G."/>
            <person name="Miranda M."/>
            <person name="Quach H.L."/>
            <person name="Tripp M."/>
            <person name="Chang C.H."/>
            <person name="Lee J.M."/>
            <person name="Toriumi M.J."/>
            <person name="Chan M.M."/>
            <person name="Tang C.C."/>
            <person name="Onodera C.S."/>
            <person name="Deng J.M."/>
            <person name="Akiyama K."/>
            <person name="Ansari Y."/>
            <person name="Arakawa T."/>
            <person name="Banh J."/>
            <person name="Banno F."/>
            <person name="Bowser L."/>
            <person name="Brooks S.Y."/>
            <person name="Carninci P."/>
            <person name="Chao Q."/>
            <person name="Choy N."/>
            <person name="Enju A."/>
            <person name="Goldsmith A.D."/>
            <person name="Gurjal M."/>
            <person name="Hansen N.F."/>
            <person name="Hayashizaki Y."/>
            <person name="Johnson-Hopson C."/>
            <person name="Hsuan V.W."/>
            <person name="Iida K."/>
            <person name="Karnes M."/>
            <person name="Khan S."/>
            <person name="Koesema E."/>
            <person name="Ishida J."/>
            <person name="Jiang P.X."/>
            <person name="Jones T."/>
            <person name="Kawai J."/>
            <person name="Kamiya A."/>
            <person name="Meyers C."/>
            <person name="Nakajima M."/>
            <person name="Narusaka M."/>
            <person name="Seki M."/>
            <person name="Sakurai T."/>
            <person name="Satou M."/>
            <person name="Tamse R."/>
            <person name="Vaysberg M."/>
            <person name="Wallender E.K."/>
            <person name="Wong C."/>
            <person name="Yamamura Y."/>
            <person name="Yuan S."/>
            <person name="Shinozaki K."/>
            <person name="Davis R.W."/>
            <person name="Theologis A."/>
            <person name="Ecker J.R."/>
        </authorList>
    </citation>
    <scope>NUCLEOTIDE SEQUENCE [LARGE SCALE MRNA] (ISOFORMS 1 AND 2)</scope>
    <source>
        <strain>cv. Columbia</strain>
    </source>
</reference>
<reference key="5">
    <citation type="submission" date="2002-03" db="EMBL/GenBank/DDBJ databases">
        <title>Full-length cDNA from Arabidopsis thaliana.</title>
        <authorList>
            <person name="Brover V.V."/>
            <person name="Troukhan M.E."/>
            <person name="Alexandrov N.A."/>
            <person name="Lu Y.-P."/>
            <person name="Flavell R.B."/>
            <person name="Feldmann K.A."/>
        </authorList>
    </citation>
    <scope>NUCLEOTIDE SEQUENCE [LARGE SCALE MRNA] (ISOFORM 2)</scope>
</reference>
<reference key="6">
    <citation type="journal article" date="1996" name="Plant J.">
        <title>Further progress towards a catalogue of all Arabidopsis genes: analysis of a set of 5000 non-redundant ESTs.</title>
        <authorList>
            <person name="Cooke R."/>
            <person name="Raynal M."/>
            <person name="Laudie M."/>
            <person name="Grellet F."/>
            <person name="Delseny M."/>
            <person name="Morris P.-C."/>
            <person name="Guerrier D."/>
            <person name="Giraudat J."/>
            <person name="Quigley F."/>
            <person name="Clabault G."/>
            <person name="Li Y.-F."/>
            <person name="Mache R."/>
            <person name="Krivitzky M."/>
            <person name="Gy I.J.-J."/>
            <person name="Kreis M."/>
            <person name="Lecharny A."/>
            <person name="Parmentier Y."/>
            <person name="Marbach J."/>
            <person name="Fleck J."/>
            <person name="Clement B."/>
            <person name="Philipps G."/>
            <person name="Herve C."/>
            <person name="Bardet C."/>
            <person name="Tremousaygue D."/>
            <person name="Lescure B."/>
            <person name="Lacomme C."/>
            <person name="Roby D."/>
            <person name="Jourjon M.-F."/>
            <person name="Chabrier P."/>
            <person name="Charpenteau J.-L."/>
            <person name="Desprez T."/>
            <person name="Amselem J."/>
            <person name="Chiapello H."/>
            <person name="Hoefte H."/>
        </authorList>
    </citation>
    <scope>NUCLEOTIDE SEQUENCE [LARGE SCALE MRNA] OF 210-247</scope>
    <source>
        <strain>cv. Columbia</strain>
        <tissue>Seedling</tissue>
    </source>
</reference>
<reference key="7">
    <citation type="journal article" date="2002" name="Plant Mol. Biol.">
        <title>Genetics of Aux/IAA and ARF action in plant growth and development.</title>
        <authorList>
            <person name="Liscum E."/>
            <person name="Reed J.W."/>
        </authorList>
    </citation>
    <scope>GENE FAMILY</scope>
    <scope>NOMENCLATURE</scope>
    <scope>FUNCTION</scope>
</reference>
<reference key="8">
    <citation type="journal article" date="2004" name="Plant Cell">
        <title>Aux/IAA proteins contain a potent transcriptional repression domain.</title>
        <authorList>
            <person name="Tiwari S.B."/>
            <person name="Hagen G."/>
            <person name="Guilfoyle T.J."/>
        </authorList>
    </citation>
    <scope>TRANSCRIPTIONAL REPRESSION DOMAIN</scope>
</reference>
<reference key="9">
    <citation type="journal article" date="2008" name="Science">
        <title>TOPLESS mediates auxin-dependent transcriptional repression during Arabidopsis embryogenesis.</title>
        <authorList>
            <person name="Szemenyei H."/>
            <person name="Hannon M."/>
            <person name="Long J.A."/>
        </authorList>
    </citation>
    <scope>INTERACTION WITH TPL</scope>
</reference>
<name>IAA13_ARATH</name>
<feature type="chain" id="PRO_0000112844" description="Auxin-responsive protein IAA13">
    <location>
        <begin position="1"/>
        <end position="247"/>
    </location>
</feature>
<feature type="domain" description="PB1" evidence="2">
    <location>
        <begin position="129"/>
        <end position="225"/>
    </location>
</feature>
<feature type="region of interest" description="Disordered" evidence="3">
    <location>
        <begin position="25"/>
        <end position="44"/>
    </location>
</feature>
<feature type="region of interest" description="Disordered" evidence="3">
    <location>
        <begin position="49"/>
        <end position="119"/>
    </location>
</feature>
<feature type="short sequence motif" description="EAR-like (transcriptional repression)">
    <location>
        <begin position="14"/>
        <end position="18"/>
    </location>
</feature>
<feature type="compositionally biased region" description="Gly residues" evidence="3">
    <location>
        <begin position="25"/>
        <end position="40"/>
    </location>
</feature>
<feature type="compositionally biased region" description="Low complexity" evidence="3">
    <location>
        <begin position="62"/>
        <end position="75"/>
    </location>
</feature>
<feature type="compositionally biased region" description="Polar residues" evidence="3">
    <location>
        <begin position="87"/>
        <end position="98"/>
    </location>
</feature>
<feature type="compositionally biased region" description="Basic and acidic residues" evidence="3">
    <location>
        <begin position="106"/>
        <end position="119"/>
    </location>
</feature>
<feature type="splice variant" id="VSP_008997" description="In isoform 2." evidence="7 8 9">
    <location>
        <position position="74"/>
    </location>
</feature>
<keyword id="KW-0025">Alternative splicing</keyword>
<keyword id="KW-0927">Auxin signaling pathway</keyword>
<keyword id="KW-0539">Nucleus</keyword>
<keyword id="KW-1185">Reference proteome</keyword>
<keyword id="KW-0678">Repressor</keyword>
<keyword id="KW-0804">Transcription</keyword>
<keyword id="KW-0805">Transcription regulation</keyword>
<organism>
    <name type="scientific">Arabidopsis thaliana</name>
    <name type="common">Mouse-ear cress</name>
    <dbReference type="NCBI Taxonomy" id="3702"/>
    <lineage>
        <taxon>Eukaryota</taxon>
        <taxon>Viridiplantae</taxon>
        <taxon>Streptophyta</taxon>
        <taxon>Embryophyta</taxon>
        <taxon>Tracheophyta</taxon>
        <taxon>Spermatophyta</taxon>
        <taxon>Magnoliopsida</taxon>
        <taxon>eudicotyledons</taxon>
        <taxon>Gunneridae</taxon>
        <taxon>Pentapetalae</taxon>
        <taxon>rosids</taxon>
        <taxon>malvids</taxon>
        <taxon>Brassicales</taxon>
        <taxon>Brassicaceae</taxon>
        <taxon>Camelineae</taxon>
        <taxon>Arabidopsis</taxon>
    </lineage>
</organism>
<dbReference type="EMBL" id="U18415">
    <property type="protein sequence ID" value="AAC49054.1"/>
    <property type="molecule type" value="mRNA"/>
</dbReference>
<dbReference type="EMBL" id="AC002332">
    <property type="protein sequence ID" value="AAB80649.1"/>
    <property type="molecule type" value="Genomic_DNA"/>
</dbReference>
<dbReference type="EMBL" id="CP002685">
    <property type="protein sequence ID" value="AEC08812.1"/>
    <property type="molecule type" value="Genomic_DNA"/>
</dbReference>
<dbReference type="EMBL" id="CP002685">
    <property type="protein sequence ID" value="AEC08813.1"/>
    <property type="molecule type" value="Genomic_DNA"/>
</dbReference>
<dbReference type="EMBL" id="CP002685">
    <property type="protein sequence ID" value="AEC08814.1"/>
    <property type="molecule type" value="Genomic_DNA"/>
</dbReference>
<dbReference type="EMBL" id="AF332399">
    <property type="protein sequence ID" value="AAG48763.1"/>
    <property type="molecule type" value="mRNA"/>
</dbReference>
<dbReference type="EMBL" id="BT005874">
    <property type="protein sequence ID" value="AAO64809.1"/>
    <property type="molecule type" value="mRNA"/>
</dbReference>
<dbReference type="EMBL" id="AY085194">
    <property type="protein sequence ID" value="AAM61745.1"/>
    <property type="molecule type" value="mRNA"/>
</dbReference>
<dbReference type="EMBL" id="Z26543">
    <property type="protein sequence ID" value="CAA81314.1"/>
    <property type="molecule type" value="mRNA"/>
</dbReference>
<dbReference type="PIR" id="S58499">
    <property type="entry name" value="S58499"/>
</dbReference>
<dbReference type="RefSeq" id="NP_001118434.1">
    <molecule id="Q38831-2"/>
    <property type="nucleotide sequence ID" value="NM_001124962.1"/>
</dbReference>
<dbReference type="RefSeq" id="NP_180889.1">
    <molecule id="Q38831-2"/>
    <property type="nucleotide sequence ID" value="NM_128891.4"/>
</dbReference>
<dbReference type="RefSeq" id="NP_850205.1">
    <molecule id="Q38831-1"/>
    <property type="nucleotide sequence ID" value="NM_179874.2"/>
</dbReference>
<dbReference type="SMR" id="Q38831"/>
<dbReference type="BioGRID" id="3241">
    <property type="interactions" value="44"/>
</dbReference>
<dbReference type="ELM" id="Q38831"/>
<dbReference type="FunCoup" id="Q38831">
    <property type="interactions" value="1804"/>
</dbReference>
<dbReference type="IntAct" id="Q38831">
    <property type="interactions" value="38"/>
</dbReference>
<dbReference type="STRING" id="3702.Q38831"/>
<dbReference type="iPTMnet" id="Q38831"/>
<dbReference type="PaxDb" id="3702-AT2G33310.2"/>
<dbReference type="ProteomicsDB" id="232114">
    <molecule id="Q38831-1"/>
</dbReference>
<dbReference type="EnsemblPlants" id="AT2G33310.1">
    <molecule id="Q38831-2"/>
    <property type="protein sequence ID" value="AT2G33310.1"/>
    <property type="gene ID" value="AT2G33310"/>
</dbReference>
<dbReference type="EnsemblPlants" id="AT2G33310.2">
    <molecule id="Q38831-1"/>
    <property type="protein sequence ID" value="AT2G33310.2"/>
    <property type="gene ID" value="AT2G33310"/>
</dbReference>
<dbReference type="EnsemblPlants" id="AT2G33310.3">
    <molecule id="Q38831-2"/>
    <property type="protein sequence ID" value="AT2G33310.3"/>
    <property type="gene ID" value="AT2G33310"/>
</dbReference>
<dbReference type="GeneID" id="817894"/>
<dbReference type="Gramene" id="AT2G33310.1">
    <molecule id="Q38831-2"/>
    <property type="protein sequence ID" value="AT2G33310.1"/>
    <property type="gene ID" value="AT2G33310"/>
</dbReference>
<dbReference type="Gramene" id="AT2G33310.2">
    <molecule id="Q38831-1"/>
    <property type="protein sequence ID" value="AT2G33310.2"/>
    <property type="gene ID" value="AT2G33310"/>
</dbReference>
<dbReference type="Gramene" id="AT2G33310.3">
    <molecule id="Q38831-2"/>
    <property type="protein sequence ID" value="AT2G33310.3"/>
    <property type="gene ID" value="AT2G33310"/>
</dbReference>
<dbReference type="KEGG" id="ath:AT2G33310"/>
<dbReference type="Araport" id="AT2G33310"/>
<dbReference type="TAIR" id="AT2G33310">
    <property type="gene designation" value="IAA13"/>
</dbReference>
<dbReference type="eggNOG" id="ENOG502R8MA">
    <property type="taxonomic scope" value="Eukaryota"/>
</dbReference>
<dbReference type="HOGENOM" id="CLU_049393_3_0_1"/>
<dbReference type="InParanoid" id="Q38831"/>
<dbReference type="OMA" id="SSHICYE"/>
<dbReference type="OrthoDB" id="773336at2759"/>
<dbReference type="PhylomeDB" id="Q38831"/>
<dbReference type="PRO" id="PR:Q38831"/>
<dbReference type="Proteomes" id="UP000006548">
    <property type="component" value="Chromosome 2"/>
</dbReference>
<dbReference type="ExpressionAtlas" id="Q38831">
    <property type="expression patterns" value="baseline and differential"/>
</dbReference>
<dbReference type="GO" id="GO:0005634">
    <property type="term" value="C:nucleus"/>
    <property type="evidence" value="ECO:0007669"/>
    <property type="project" value="UniProtKB-SubCell"/>
</dbReference>
<dbReference type="GO" id="GO:0003700">
    <property type="term" value="F:DNA-binding transcription factor activity"/>
    <property type="evidence" value="ECO:0000250"/>
    <property type="project" value="TAIR"/>
</dbReference>
<dbReference type="GO" id="GO:0042802">
    <property type="term" value="F:identical protein binding"/>
    <property type="evidence" value="ECO:0000353"/>
    <property type="project" value="IntAct"/>
</dbReference>
<dbReference type="GO" id="GO:0009734">
    <property type="term" value="P:auxin-activated signaling pathway"/>
    <property type="evidence" value="ECO:0007669"/>
    <property type="project" value="UniProtKB-KW"/>
</dbReference>
<dbReference type="GO" id="GO:0009733">
    <property type="term" value="P:response to auxin"/>
    <property type="evidence" value="ECO:0000304"/>
    <property type="project" value="TAIR"/>
</dbReference>
<dbReference type="FunFam" id="3.10.20.90:FF:000078">
    <property type="entry name" value="Auxin-responsive protein"/>
    <property type="match status" value="1"/>
</dbReference>
<dbReference type="Gene3D" id="3.10.20.90">
    <property type="entry name" value="Phosphatidylinositol 3-kinase Catalytic Subunit, Chain A, domain 1"/>
    <property type="match status" value="1"/>
</dbReference>
<dbReference type="InterPro" id="IPR033389">
    <property type="entry name" value="AUX/IAA_dom"/>
</dbReference>
<dbReference type="InterPro" id="IPR003311">
    <property type="entry name" value="AUX_IAA"/>
</dbReference>
<dbReference type="InterPro" id="IPR053793">
    <property type="entry name" value="PB1-like"/>
</dbReference>
<dbReference type="PANTHER" id="PTHR31734:SF261">
    <property type="entry name" value="AUXIN-RESPONSIVE PROTEIN IAA13"/>
    <property type="match status" value="1"/>
</dbReference>
<dbReference type="PANTHER" id="PTHR31734">
    <property type="entry name" value="AUXIN-RESPONSIVE PROTEIN IAA17"/>
    <property type="match status" value="1"/>
</dbReference>
<dbReference type="Pfam" id="PF02309">
    <property type="entry name" value="AUX_IAA"/>
    <property type="match status" value="1"/>
</dbReference>
<dbReference type="SUPFAM" id="SSF54277">
    <property type="entry name" value="CAD &amp; PB1 domains"/>
    <property type="match status" value="1"/>
</dbReference>
<dbReference type="PROSITE" id="PS51745">
    <property type="entry name" value="PB1"/>
    <property type="match status" value="1"/>
</dbReference>
<sequence length="247" mass="26729">MITELEMGKGESELELGLGLSLGGGTAAKIGKSGGGGAWGERGRLLTAKDFPSVGSKRAADSASHAGSSPPRSSSQVVGWPPIGSHRMNSLVNNQATKSAREEEEAGKKKVKDDEPKDVTKKVNGKVQVGFIKVNMDGVAIGRKVDLNAHSSYENLAQTLEDMFFRTNPGTVGLTSQFTKPLRLLDGSSEFVLTYEDKEGDWMLVGDVPWRMFINSVKRLRVMKTSEANGLAARNQEPNERQRKQPV</sequence>